<organism>
    <name type="scientific">Cutibacterium acnes (strain DSM 16379 / KPA171202)</name>
    <name type="common">Propionibacterium acnes</name>
    <dbReference type="NCBI Taxonomy" id="267747"/>
    <lineage>
        <taxon>Bacteria</taxon>
        <taxon>Bacillati</taxon>
        <taxon>Actinomycetota</taxon>
        <taxon>Actinomycetes</taxon>
        <taxon>Propionibacteriales</taxon>
        <taxon>Propionibacteriaceae</taxon>
        <taxon>Cutibacterium</taxon>
    </lineage>
</organism>
<name>COAD_CUTAK</name>
<dbReference type="EC" id="2.7.7.3" evidence="1"/>
<dbReference type="EMBL" id="AE017283">
    <property type="protein sequence ID" value="AAT83211.1"/>
    <property type="molecule type" value="Genomic_DNA"/>
</dbReference>
<dbReference type="RefSeq" id="WP_002514272.1">
    <property type="nucleotide sequence ID" value="NZ_CP025935.1"/>
</dbReference>
<dbReference type="SMR" id="Q6A7Q4"/>
<dbReference type="EnsemblBacteria" id="AAT83211">
    <property type="protein sequence ID" value="AAT83211"/>
    <property type="gene ID" value="PPA1463"/>
</dbReference>
<dbReference type="KEGG" id="pac:PPA1463"/>
<dbReference type="eggNOG" id="COG0669">
    <property type="taxonomic scope" value="Bacteria"/>
</dbReference>
<dbReference type="HOGENOM" id="CLU_100149_1_1_11"/>
<dbReference type="UniPathway" id="UPA00241">
    <property type="reaction ID" value="UER00355"/>
</dbReference>
<dbReference type="Proteomes" id="UP000000603">
    <property type="component" value="Chromosome"/>
</dbReference>
<dbReference type="GO" id="GO:0005737">
    <property type="term" value="C:cytoplasm"/>
    <property type="evidence" value="ECO:0007669"/>
    <property type="project" value="UniProtKB-SubCell"/>
</dbReference>
<dbReference type="GO" id="GO:0005524">
    <property type="term" value="F:ATP binding"/>
    <property type="evidence" value="ECO:0007669"/>
    <property type="project" value="UniProtKB-KW"/>
</dbReference>
<dbReference type="GO" id="GO:0004595">
    <property type="term" value="F:pantetheine-phosphate adenylyltransferase activity"/>
    <property type="evidence" value="ECO:0007669"/>
    <property type="project" value="UniProtKB-UniRule"/>
</dbReference>
<dbReference type="GO" id="GO:0015937">
    <property type="term" value="P:coenzyme A biosynthetic process"/>
    <property type="evidence" value="ECO:0007669"/>
    <property type="project" value="UniProtKB-UniRule"/>
</dbReference>
<dbReference type="CDD" id="cd02163">
    <property type="entry name" value="PPAT"/>
    <property type="match status" value="1"/>
</dbReference>
<dbReference type="Gene3D" id="3.40.50.620">
    <property type="entry name" value="HUPs"/>
    <property type="match status" value="1"/>
</dbReference>
<dbReference type="HAMAP" id="MF_00151">
    <property type="entry name" value="PPAT_bact"/>
    <property type="match status" value="1"/>
</dbReference>
<dbReference type="InterPro" id="IPR004821">
    <property type="entry name" value="Cyt_trans-like"/>
</dbReference>
<dbReference type="InterPro" id="IPR001980">
    <property type="entry name" value="PPAT"/>
</dbReference>
<dbReference type="InterPro" id="IPR014729">
    <property type="entry name" value="Rossmann-like_a/b/a_fold"/>
</dbReference>
<dbReference type="NCBIfam" id="TIGR01510">
    <property type="entry name" value="coaD_prev_kdtB"/>
    <property type="match status" value="1"/>
</dbReference>
<dbReference type="NCBIfam" id="TIGR00125">
    <property type="entry name" value="cyt_tran_rel"/>
    <property type="match status" value="1"/>
</dbReference>
<dbReference type="PANTHER" id="PTHR21342">
    <property type="entry name" value="PHOSPHOPANTETHEINE ADENYLYLTRANSFERASE"/>
    <property type="match status" value="1"/>
</dbReference>
<dbReference type="PANTHER" id="PTHR21342:SF1">
    <property type="entry name" value="PHOSPHOPANTETHEINE ADENYLYLTRANSFERASE"/>
    <property type="match status" value="1"/>
</dbReference>
<dbReference type="Pfam" id="PF01467">
    <property type="entry name" value="CTP_transf_like"/>
    <property type="match status" value="1"/>
</dbReference>
<dbReference type="PRINTS" id="PR01020">
    <property type="entry name" value="LPSBIOSNTHSS"/>
</dbReference>
<dbReference type="SUPFAM" id="SSF52374">
    <property type="entry name" value="Nucleotidylyl transferase"/>
    <property type="match status" value="1"/>
</dbReference>
<accession>Q6A7Q4</accession>
<feature type="chain" id="PRO_0000156253" description="Phosphopantetheine adenylyltransferase">
    <location>
        <begin position="1"/>
        <end position="157"/>
    </location>
</feature>
<feature type="binding site" evidence="1">
    <location>
        <begin position="8"/>
        <end position="9"/>
    </location>
    <ligand>
        <name>ATP</name>
        <dbReference type="ChEBI" id="CHEBI:30616"/>
    </ligand>
</feature>
<feature type="binding site" evidence="1">
    <location>
        <position position="8"/>
    </location>
    <ligand>
        <name>substrate</name>
    </ligand>
</feature>
<feature type="binding site" evidence="1">
    <location>
        <position position="16"/>
    </location>
    <ligand>
        <name>ATP</name>
        <dbReference type="ChEBI" id="CHEBI:30616"/>
    </ligand>
</feature>
<feature type="binding site" evidence="1">
    <location>
        <position position="40"/>
    </location>
    <ligand>
        <name>substrate</name>
    </ligand>
</feature>
<feature type="binding site" evidence="1">
    <location>
        <position position="72"/>
    </location>
    <ligand>
        <name>substrate</name>
    </ligand>
</feature>
<feature type="binding site" evidence="1">
    <location>
        <position position="86"/>
    </location>
    <ligand>
        <name>substrate</name>
    </ligand>
</feature>
<feature type="binding site" evidence="1">
    <location>
        <begin position="87"/>
        <end position="89"/>
    </location>
    <ligand>
        <name>ATP</name>
        <dbReference type="ChEBI" id="CHEBI:30616"/>
    </ligand>
</feature>
<feature type="binding site" evidence="1">
    <location>
        <position position="97"/>
    </location>
    <ligand>
        <name>ATP</name>
        <dbReference type="ChEBI" id="CHEBI:30616"/>
    </ligand>
</feature>
<feature type="binding site" evidence="1">
    <location>
        <begin position="121"/>
        <end position="127"/>
    </location>
    <ligand>
        <name>ATP</name>
        <dbReference type="ChEBI" id="CHEBI:30616"/>
    </ligand>
</feature>
<feature type="site" description="Transition state stabilizer" evidence="1">
    <location>
        <position position="16"/>
    </location>
</feature>
<reference key="1">
    <citation type="journal article" date="2004" name="Science">
        <title>The complete genome sequence of Propionibacterium acnes, a commensal of human skin.</title>
        <authorList>
            <person name="Brueggemann H."/>
            <person name="Henne A."/>
            <person name="Hoster F."/>
            <person name="Liesegang H."/>
            <person name="Wiezer A."/>
            <person name="Strittmatter A."/>
            <person name="Hujer S."/>
            <person name="Duerre P."/>
            <person name="Gottschalk G."/>
        </authorList>
    </citation>
    <scope>NUCLEOTIDE SEQUENCE [LARGE SCALE GENOMIC DNA]</scope>
    <source>
        <strain>DSM 16379 / KPA171202</strain>
    </source>
</reference>
<proteinExistence type="inferred from homology"/>
<protein>
    <recommendedName>
        <fullName evidence="1">Phosphopantetheine adenylyltransferase</fullName>
        <ecNumber evidence="1">2.7.7.3</ecNumber>
    </recommendedName>
    <alternativeName>
        <fullName evidence="1">Dephospho-CoA pyrophosphorylase</fullName>
    </alternativeName>
    <alternativeName>
        <fullName evidence="1">Pantetheine-phosphate adenylyltransferase</fullName>
        <shortName evidence="1">PPAT</shortName>
    </alternativeName>
</protein>
<gene>
    <name evidence="1" type="primary">coaD</name>
    <name type="ordered locus">PPA1463</name>
</gene>
<keyword id="KW-0067">ATP-binding</keyword>
<keyword id="KW-0173">Coenzyme A biosynthesis</keyword>
<keyword id="KW-0963">Cytoplasm</keyword>
<keyword id="KW-0460">Magnesium</keyword>
<keyword id="KW-0547">Nucleotide-binding</keyword>
<keyword id="KW-0548">Nucleotidyltransferase</keyword>
<keyword id="KW-0808">Transferase</keyword>
<evidence type="ECO:0000255" key="1">
    <source>
        <dbReference type="HAMAP-Rule" id="MF_00151"/>
    </source>
</evidence>
<comment type="function">
    <text evidence="1">Reversibly transfers an adenylyl group from ATP to 4'-phosphopantetheine, yielding dephospho-CoA (dPCoA) and pyrophosphate.</text>
</comment>
<comment type="catalytic activity">
    <reaction evidence="1">
        <text>(R)-4'-phosphopantetheine + ATP + H(+) = 3'-dephospho-CoA + diphosphate</text>
        <dbReference type="Rhea" id="RHEA:19801"/>
        <dbReference type="ChEBI" id="CHEBI:15378"/>
        <dbReference type="ChEBI" id="CHEBI:30616"/>
        <dbReference type="ChEBI" id="CHEBI:33019"/>
        <dbReference type="ChEBI" id="CHEBI:57328"/>
        <dbReference type="ChEBI" id="CHEBI:61723"/>
        <dbReference type="EC" id="2.7.7.3"/>
    </reaction>
</comment>
<comment type="cofactor">
    <cofactor evidence="1">
        <name>Mg(2+)</name>
        <dbReference type="ChEBI" id="CHEBI:18420"/>
    </cofactor>
</comment>
<comment type="pathway">
    <text evidence="1">Cofactor biosynthesis; coenzyme A biosynthesis; CoA from (R)-pantothenate: step 4/5.</text>
</comment>
<comment type="subunit">
    <text evidence="1">Homohexamer.</text>
</comment>
<comment type="subcellular location">
    <subcellularLocation>
        <location evidence="1">Cytoplasm</location>
    </subcellularLocation>
</comment>
<comment type="similarity">
    <text evidence="1">Belongs to the bacterial CoaD family.</text>
</comment>
<sequence length="157" mass="16660">MKAVFSGSFDPITLGHVDIVTRAAELIDEVVVGVAVNSAKNGIFSMDERVAFVKDAVADIPGVEVALVDGLLVDFCTEMGADAIIRGLRFGGDFDYELQMAHLNKAMSGIETILLPAGREFGTISSSMIRSAACNGGNVSEFVPGMVNTALHERFPH</sequence>